<accession>Q2RSU9</accession>
<sequence>MEWRFADTPVSYPEALAFMDDRIAKIREDRAGECVWLLEHPPLYTAGTSADPADLLSPDRFPVYAAGRGGQYTYHGPGQRVGYVMLDLRRRGKDVRCFVHNLEELMIRALAEFNIRGERREGRVGIWVARGGGREDKIGAIGVRVRHWITFHGFALNVEPDLSHFSGIVPCGISDHGVTSLWDLGQTATLQEVDSALMRSFDAVFGPCPTESLTST</sequence>
<organism>
    <name type="scientific">Rhodospirillum rubrum (strain ATCC 11170 / ATH 1.1.1 / DSM 467 / LMG 4362 / NCIMB 8255 / S1)</name>
    <dbReference type="NCBI Taxonomy" id="269796"/>
    <lineage>
        <taxon>Bacteria</taxon>
        <taxon>Pseudomonadati</taxon>
        <taxon>Pseudomonadota</taxon>
        <taxon>Alphaproteobacteria</taxon>
        <taxon>Rhodospirillales</taxon>
        <taxon>Rhodospirillaceae</taxon>
        <taxon>Rhodospirillum</taxon>
    </lineage>
</organism>
<name>LIPB_RHORT</name>
<evidence type="ECO:0000255" key="1">
    <source>
        <dbReference type="HAMAP-Rule" id="MF_00013"/>
    </source>
</evidence>
<evidence type="ECO:0000255" key="2">
    <source>
        <dbReference type="PROSITE-ProRule" id="PRU01067"/>
    </source>
</evidence>
<dbReference type="EC" id="2.3.1.181" evidence="1"/>
<dbReference type="EMBL" id="CP000230">
    <property type="protein sequence ID" value="ABC22796.1"/>
    <property type="molecule type" value="Genomic_DNA"/>
</dbReference>
<dbReference type="RefSeq" id="YP_427083.1">
    <property type="nucleotide sequence ID" value="NC_007643.1"/>
</dbReference>
<dbReference type="SMR" id="Q2RSU9"/>
<dbReference type="STRING" id="269796.Rru_A1996"/>
<dbReference type="EnsemblBacteria" id="ABC22796">
    <property type="protein sequence ID" value="ABC22796"/>
    <property type="gene ID" value="Rru_A1996"/>
</dbReference>
<dbReference type="KEGG" id="rru:Rru_A1996"/>
<dbReference type="PATRIC" id="fig|269796.9.peg.2081"/>
<dbReference type="eggNOG" id="COG0321">
    <property type="taxonomic scope" value="Bacteria"/>
</dbReference>
<dbReference type="HOGENOM" id="CLU_035168_3_0_5"/>
<dbReference type="PhylomeDB" id="Q2RSU9"/>
<dbReference type="UniPathway" id="UPA00538">
    <property type="reaction ID" value="UER00592"/>
</dbReference>
<dbReference type="Proteomes" id="UP000001929">
    <property type="component" value="Chromosome"/>
</dbReference>
<dbReference type="GO" id="GO:0005737">
    <property type="term" value="C:cytoplasm"/>
    <property type="evidence" value="ECO:0007669"/>
    <property type="project" value="UniProtKB-SubCell"/>
</dbReference>
<dbReference type="GO" id="GO:0033819">
    <property type="term" value="F:lipoyl(octanoyl) transferase activity"/>
    <property type="evidence" value="ECO:0007669"/>
    <property type="project" value="UniProtKB-EC"/>
</dbReference>
<dbReference type="GO" id="GO:0036211">
    <property type="term" value="P:protein modification process"/>
    <property type="evidence" value="ECO:0007669"/>
    <property type="project" value="InterPro"/>
</dbReference>
<dbReference type="CDD" id="cd16444">
    <property type="entry name" value="LipB"/>
    <property type="match status" value="1"/>
</dbReference>
<dbReference type="Gene3D" id="3.30.930.10">
    <property type="entry name" value="Bira Bifunctional Protein, Domain 2"/>
    <property type="match status" value="1"/>
</dbReference>
<dbReference type="HAMAP" id="MF_00013">
    <property type="entry name" value="LipB"/>
    <property type="match status" value="1"/>
</dbReference>
<dbReference type="InterPro" id="IPR045864">
    <property type="entry name" value="aa-tRNA-synth_II/BPL/LPL"/>
</dbReference>
<dbReference type="InterPro" id="IPR004143">
    <property type="entry name" value="BPL_LPL_catalytic"/>
</dbReference>
<dbReference type="InterPro" id="IPR000544">
    <property type="entry name" value="Octanoyltransferase"/>
</dbReference>
<dbReference type="InterPro" id="IPR020605">
    <property type="entry name" value="Octanoyltransferase_CS"/>
</dbReference>
<dbReference type="NCBIfam" id="TIGR00214">
    <property type="entry name" value="lipB"/>
    <property type="match status" value="1"/>
</dbReference>
<dbReference type="NCBIfam" id="NF010921">
    <property type="entry name" value="PRK14341.1"/>
    <property type="match status" value="1"/>
</dbReference>
<dbReference type="NCBIfam" id="NF010925">
    <property type="entry name" value="PRK14345.1"/>
    <property type="match status" value="1"/>
</dbReference>
<dbReference type="PANTHER" id="PTHR10993:SF7">
    <property type="entry name" value="LIPOYLTRANSFERASE 2, MITOCHONDRIAL-RELATED"/>
    <property type="match status" value="1"/>
</dbReference>
<dbReference type="PANTHER" id="PTHR10993">
    <property type="entry name" value="OCTANOYLTRANSFERASE"/>
    <property type="match status" value="1"/>
</dbReference>
<dbReference type="Pfam" id="PF21948">
    <property type="entry name" value="LplA-B_cat"/>
    <property type="match status" value="1"/>
</dbReference>
<dbReference type="PIRSF" id="PIRSF016262">
    <property type="entry name" value="LPLase"/>
    <property type="match status" value="1"/>
</dbReference>
<dbReference type="SUPFAM" id="SSF55681">
    <property type="entry name" value="Class II aaRS and biotin synthetases"/>
    <property type="match status" value="1"/>
</dbReference>
<dbReference type="PROSITE" id="PS51733">
    <property type="entry name" value="BPL_LPL_CATALYTIC"/>
    <property type="match status" value="1"/>
</dbReference>
<dbReference type="PROSITE" id="PS01313">
    <property type="entry name" value="LIPB"/>
    <property type="match status" value="1"/>
</dbReference>
<comment type="function">
    <text evidence="1">Catalyzes the transfer of endogenously produced octanoic acid from octanoyl-acyl-carrier-protein onto the lipoyl domains of lipoate-dependent enzymes. Lipoyl-ACP can also act as a substrate although octanoyl-ACP is likely to be the physiological substrate.</text>
</comment>
<comment type="catalytic activity">
    <reaction evidence="1">
        <text>octanoyl-[ACP] + L-lysyl-[protein] = N(6)-octanoyl-L-lysyl-[protein] + holo-[ACP] + H(+)</text>
        <dbReference type="Rhea" id="RHEA:17665"/>
        <dbReference type="Rhea" id="RHEA-COMP:9636"/>
        <dbReference type="Rhea" id="RHEA-COMP:9685"/>
        <dbReference type="Rhea" id="RHEA-COMP:9752"/>
        <dbReference type="Rhea" id="RHEA-COMP:9928"/>
        <dbReference type="ChEBI" id="CHEBI:15378"/>
        <dbReference type="ChEBI" id="CHEBI:29969"/>
        <dbReference type="ChEBI" id="CHEBI:64479"/>
        <dbReference type="ChEBI" id="CHEBI:78463"/>
        <dbReference type="ChEBI" id="CHEBI:78809"/>
        <dbReference type="EC" id="2.3.1.181"/>
    </reaction>
</comment>
<comment type="pathway">
    <text evidence="1">Protein modification; protein lipoylation via endogenous pathway; protein N(6)-(lipoyl)lysine from octanoyl-[acyl-carrier-protein]: step 1/2.</text>
</comment>
<comment type="subcellular location">
    <subcellularLocation>
        <location evidence="1">Cytoplasm</location>
    </subcellularLocation>
</comment>
<comment type="miscellaneous">
    <text evidence="1">In the reaction, the free carboxyl group of octanoic acid is attached via an amide linkage to the epsilon-amino group of a specific lysine residue of lipoyl domains of lipoate-dependent enzymes.</text>
</comment>
<comment type="similarity">
    <text evidence="1">Belongs to the LipB family.</text>
</comment>
<feature type="chain" id="PRO_0000242758" description="Octanoyltransferase">
    <location>
        <begin position="1"/>
        <end position="216"/>
    </location>
</feature>
<feature type="domain" description="BPL/LPL catalytic" evidence="2">
    <location>
        <begin position="29"/>
        <end position="209"/>
    </location>
</feature>
<feature type="active site" description="Acyl-thioester intermediate" evidence="1">
    <location>
        <position position="171"/>
    </location>
</feature>
<feature type="binding site" evidence="1">
    <location>
        <begin position="68"/>
        <end position="75"/>
    </location>
    <ligand>
        <name>substrate</name>
    </ligand>
</feature>
<feature type="binding site" evidence="1">
    <location>
        <begin position="140"/>
        <end position="142"/>
    </location>
    <ligand>
        <name>substrate</name>
    </ligand>
</feature>
<feature type="binding site" evidence="1">
    <location>
        <begin position="153"/>
        <end position="155"/>
    </location>
    <ligand>
        <name>substrate</name>
    </ligand>
</feature>
<feature type="site" description="Lowers pKa of active site Cys" evidence="1">
    <location>
        <position position="137"/>
    </location>
</feature>
<reference key="1">
    <citation type="journal article" date="2011" name="Stand. Genomic Sci.">
        <title>Complete genome sequence of Rhodospirillum rubrum type strain (S1).</title>
        <authorList>
            <person name="Munk A.C."/>
            <person name="Copeland A."/>
            <person name="Lucas S."/>
            <person name="Lapidus A."/>
            <person name="Del Rio T.G."/>
            <person name="Barry K."/>
            <person name="Detter J.C."/>
            <person name="Hammon N."/>
            <person name="Israni S."/>
            <person name="Pitluck S."/>
            <person name="Brettin T."/>
            <person name="Bruce D."/>
            <person name="Han C."/>
            <person name="Tapia R."/>
            <person name="Gilna P."/>
            <person name="Schmutz J."/>
            <person name="Larimer F."/>
            <person name="Land M."/>
            <person name="Kyrpides N.C."/>
            <person name="Mavromatis K."/>
            <person name="Richardson P."/>
            <person name="Rohde M."/>
            <person name="Goeker M."/>
            <person name="Klenk H.P."/>
            <person name="Zhang Y."/>
            <person name="Roberts G.P."/>
            <person name="Reslewic S."/>
            <person name="Schwartz D.C."/>
        </authorList>
    </citation>
    <scope>NUCLEOTIDE SEQUENCE [LARGE SCALE GENOMIC DNA]</scope>
    <source>
        <strain>ATCC 11170 / ATH 1.1.1 / DSM 467 / LMG 4362 / NCIMB 8255 / S1</strain>
    </source>
</reference>
<gene>
    <name evidence="1" type="primary">lipB</name>
    <name type="ordered locus">Rru_A1996</name>
</gene>
<proteinExistence type="inferred from homology"/>
<keyword id="KW-0012">Acyltransferase</keyword>
<keyword id="KW-0963">Cytoplasm</keyword>
<keyword id="KW-1185">Reference proteome</keyword>
<keyword id="KW-0808">Transferase</keyword>
<protein>
    <recommendedName>
        <fullName evidence="1">Octanoyltransferase</fullName>
        <ecNumber evidence="1">2.3.1.181</ecNumber>
    </recommendedName>
    <alternativeName>
        <fullName evidence="1">Lipoate-protein ligase B</fullName>
    </alternativeName>
    <alternativeName>
        <fullName evidence="1">Lipoyl/octanoyl transferase</fullName>
    </alternativeName>
    <alternativeName>
        <fullName evidence="1">Octanoyl-[acyl-carrier-protein]-protein N-octanoyltransferase</fullName>
    </alternativeName>
</protein>